<evidence type="ECO:0000255" key="1">
    <source>
        <dbReference type="HAMAP-Rule" id="MF_01241"/>
    </source>
</evidence>
<accession>Q8Z8G0</accession>
<gene>
    <name evidence="1" type="primary">nagB</name>
    <name type="ordered locus">STY0722</name>
    <name type="ordered locus">t2191</name>
</gene>
<keyword id="KW-0021">Allosteric enzyme</keyword>
<keyword id="KW-0119">Carbohydrate metabolism</keyword>
<keyword id="KW-0378">Hydrolase</keyword>
<comment type="function">
    <text evidence="1">Catalyzes the reversible isomerization-deamination of glucosamine 6-phosphate (GlcN6P) to form fructose 6-phosphate (Fru6P) and ammonium ion.</text>
</comment>
<comment type="catalytic activity">
    <reaction evidence="1">
        <text>alpha-D-glucosamine 6-phosphate + H2O = beta-D-fructose 6-phosphate + NH4(+)</text>
        <dbReference type="Rhea" id="RHEA:12172"/>
        <dbReference type="ChEBI" id="CHEBI:15377"/>
        <dbReference type="ChEBI" id="CHEBI:28938"/>
        <dbReference type="ChEBI" id="CHEBI:57634"/>
        <dbReference type="ChEBI" id="CHEBI:75989"/>
        <dbReference type="EC" id="3.5.99.6"/>
    </reaction>
</comment>
<comment type="activity regulation">
    <text evidence="1">Allosterically activated by N-acetylglucosamine 6-phosphate (GlcNAc6P).</text>
</comment>
<comment type="pathway">
    <text evidence="1">Amino-sugar metabolism; N-acetylneuraminate degradation; D-fructose 6-phosphate from N-acetylneuraminate: step 5/5.</text>
</comment>
<comment type="subunit">
    <text evidence="1">Homohexamer.</text>
</comment>
<comment type="similarity">
    <text evidence="1">Belongs to the glucosamine/galactosamine-6-phosphate isomerase family. NagB subfamily.</text>
</comment>
<name>NAGB_SALTI</name>
<reference key="1">
    <citation type="journal article" date="2001" name="Nature">
        <title>Complete genome sequence of a multiple drug resistant Salmonella enterica serovar Typhi CT18.</title>
        <authorList>
            <person name="Parkhill J."/>
            <person name="Dougan G."/>
            <person name="James K.D."/>
            <person name="Thomson N.R."/>
            <person name="Pickard D."/>
            <person name="Wain J."/>
            <person name="Churcher C.M."/>
            <person name="Mungall K.L."/>
            <person name="Bentley S.D."/>
            <person name="Holden M.T.G."/>
            <person name="Sebaihia M."/>
            <person name="Baker S."/>
            <person name="Basham D."/>
            <person name="Brooks K."/>
            <person name="Chillingworth T."/>
            <person name="Connerton P."/>
            <person name="Cronin A."/>
            <person name="Davis P."/>
            <person name="Davies R.M."/>
            <person name="Dowd L."/>
            <person name="White N."/>
            <person name="Farrar J."/>
            <person name="Feltwell T."/>
            <person name="Hamlin N."/>
            <person name="Haque A."/>
            <person name="Hien T.T."/>
            <person name="Holroyd S."/>
            <person name="Jagels K."/>
            <person name="Krogh A."/>
            <person name="Larsen T.S."/>
            <person name="Leather S."/>
            <person name="Moule S."/>
            <person name="O'Gaora P."/>
            <person name="Parry C."/>
            <person name="Quail M.A."/>
            <person name="Rutherford K.M."/>
            <person name="Simmonds M."/>
            <person name="Skelton J."/>
            <person name="Stevens K."/>
            <person name="Whitehead S."/>
            <person name="Barrell B.G."/>
        </authorList>
    </citation>
    <scope>NUCLEOTIDE SEQUENCE [LARGE SCALE GENOMIC DNA]</scope>
    <source>
        <strain>CT18</strain>
    </source>
</reference>
<reference key="2">
    <citation type="journal article" date="2003" name="J. Bacteriol.">
        <title>Comparative genomics of Salmonella enterica serovar Typhi strains Ty2 and CT18.</title>
        <authorList>
            <person name="Deng W."/>
            <person name="Liou S.-R."/>
            <person name="Plunkett G. III"/>
            <person name="Mayhew G.F."/>
            <person name="Rose D.J."/>
            <person name="Burland V."/>
            <person name="Kodoyianni V."/>
            <person name="Schwartz D.C."/>
            <person name="Blattner F.R."/>
        </authorList>
    </citation>
    <scope>NUCLEOTIDE SEQUENCE [LARGE SCALE GENOMIC DNA]</scope>
    <source>
        <strain>ATCC 700931 / Ty2</strain>
    </source>
</reference>
<proteinExistence type="inferred from homology"/>
<feature type="chain" id="PRO_0000160159" description="Glucosamine-6-phosphate deaminase">
    <location>
        <begin position="1"/>
        <end position="266"/>
    </location>
</feature>
<feature type="active site" description="Proton acceptor; for enolization step" evidence="1">
    <location>
        <position position="72"/>
    </location>
</feature>
<feature type="active site" description="For ring-opening step" evidence="1">
    <location>
        <position position="141"/>
    </location>
</feature>
<feature type="active site" description="Proton acceptor; for ring-opening step" evidence="1">
    <location>
        <position position="143"/>
    </location>
</feature>
<feature type="active site" description="For ring-opening step" evidence="1">
    <location>
        <position position="148"/>
    </location>
</feature>
<feature type="site" description="Part of the allosteric site" evidence="1">
    <location>
        <position position="151"/>
    </location>
</feature>
<feature type="site" description="Part of the allosteric site" evidence="1">
    <location>
        <position position="158"/>
    </location>
</feature>
<feature type="site" description="Part of the allosteric site" evidence="1">
    <location>
        <position position="160"/>
    </location>
</feature>
<feature type="site" description="Part of the allosteric site" evidence="1">
    <location>
        <position position="161"/>
    </location>
</feature>
<feature type="site" description="Part of the allosteric site" evidence="1">
    <location>
        <position position="254"/>
    </location>
</feature>
<dbReference type="EC" id="3.5.99.6" evidence="1"/>
<dbReference type="EMBL" id="AL513382">
    <property type="protein sequence ID" value="CAD05147.1"/>
    <property type="molecule type" value="Genomic_DNA"/>
</dbReference>
<dbReference type="EMBL" id="AE014613">
    <property type="protein sequence ID" value="AAO69801.1"/>
    <property type="molecule type" value="Genomic_DNA"/>
</dbReference>
<dbReference type="RefSeq" id="NP_455245.1">
    <property type="nucleotide sequence ID" value="NC_003198.1"/>
</dbReference>
<dbReference type="RefSeq" id="WP_001237064.1">
    <property type="nucleotide sequence ID" value="NZ_WSUR01000015.1"/>
</dbReference>
<dbReference type="SMR" id="Q8Z8G0"/>
<dbReference type="STRING" id="220341.gene:17584734"/>
<dbReference type="KEGG" id="stt:t2191"/>
<dbReference type="KEGG" id="sty:STY0722"/>
<dbReference type="PATRIC" id="fig|220341.7.peg.727"/>
<dbReference type="eggNOG" id="COG0363">
    <property type="taxonomic scope" value="Bacteria"/>
</dbReference>
<dbReference type="HOGENOM" id="CLU_049611_0_1_6"/>
<dbReference type="OMA" id="HVITQGI"/>
<dbReference type="OrthoDB" id="9791139at2"/>
<dbReference type="UniPathway" id="UPA00629">
    <property type="reaction ID" value="UER00684"/>
</dbReference>
<dbReference type="Proteomes" id="UP000000541">
    <property type="component" value="Chromosome"/>
</dbReference>
<dbReference type="Proteomes" id="UP000002670">
    <property type="component" value="Chromosome"/>
</dbReference>
<dbReference type="GO" id="GO:0005737">
    <property type="term" value="C:cytoplasm"/>
    <property type="evidence" value="ECO:0007669"/>
    <property type="project" value="TreeGrafter"/>
</dbReference>
<dbReference type="GO" id="GO:0004342">
    <property type="term" value="F:glucosamine-6-phosphate deaminase activity"/>
    <property type="evidence" value="ECO:0007669"/>
    <property type="project" value="UniProtKB-UniRule"/>
</dbReference>
<dbReference type="GO" id="GO:0042802">
    <property type="term" value="F:identical protein binding"/>
    <property type="evidence" value="ECO:0007669"/>
    <property type="project" value="TreeGrafter"/>
</dbReference>
<dbReference type="GO" id="GO:0005975">
    <property type="term" value="P:carbohydrate metabolic process"/>
    <property type="evidence" value="ECO:0007669"/>
    <property type="project" value="InterPro"/>
</dbReference>
<dbReference type="GO" id="GO:0006043">
    <property type="term" value="P:glucosamine catabolic process"/>
    <property type="evidence" value="ECO:0007669"/>
    <property type="project" value="TreeGrafter"/>
</dbReference>
<dbReference type="GO" id="GO:0006046">
    <property type="term" value="P:N-acetylglucosamine catabolic process"/>
    <property type="evidence" value="ECO:0007669"/>
    <property type="project" value="TreeGrafter"/>
</dbReference>
<dbReference type="GO" id="GO:0019262">
    <property type="term" value="P:N-acetylneuraminate catabolic process"/>
    <property type="evidence" value="ECO:0007669"/>
    <property type="project" value="UniProtKB-UniRule"/>
</dbReference>
<dbReference type="CDD" id="cd01399">
    <property type="entry name" value="GlcN6P_deaminase"/>
    <property type="match status" value="1"/>
</dbReference>
<dbReference type="FunFam" id="3.40.50.1360:FF:000002">
    <property type="entry name" value="Glucosamine-6-phosphate deaminase"/>
    <property type="match status" value="1"/>
</dbReference>
<dbReference type="Gene3D" id="3.40.50.1360">
    <property type="match status" value="1"/>
</dbReference>
<dbReference type="HAMAP" id="MF_01241">
    <property type="entry name" value="GlcN6P_deamin"/>
    <property type="match status" value="1"/>
</dbReference>
<dbReference type="InterPro" id="IPR006148">
    <property type="entry name" value="Glc/Gal-6P_isomerase"/>
</dbReference>
<dbReference type="InterPro" id="IPR004547">
    <property type="entry name" value="Glucosamine6P_isomerase"/>
</dbReference>
<dbReference type="InterPro" id="IPR018321">
    <property type="entry name" value="Glucosamine6P_isomerase_CS"/>
</dbReference>
<dbReference type="InterPro" id="IPR037171">
    <property type="entry name" value="NagB/RpiA_transferase-like"/>
</dbReference>
<dbReference type="NCBIfam" id="TIGR00502">
    <property type="entry name" value="nagB"/>
    <property type="match status" value="1"/>
</dbReference>
<dbReference type="NCBIfam" id="NF001685">
    <property type="entry name" value="PRK00443.1-5"/>
    <property type="match status" value="1"/>
</dbReference>
<dbReference type="PANTHER" id="PTHR11280">
    <property type="entry name" value="GLUCOSAMINE-6-PHOSPHATE ISOMERASE"/>
    <property type="match status" value="1"/>
</dbReference>
<dbReference type="PANTHER" id="PTHR11280:SF5">
    <property type="entry name" value="GLUCOSAMINE-6-PHOSPHATE ISOMERASE"/>
    <property type="match status" value="1"/>
</dbReference>
<dbReference type="Pfam" id="PF01182">
    <property type="entry name" value="Glucosamine_iso"/>
    <property type="match status" value="1"/>
</dbReference>
<dbReference type="SUPFAM" id="SSF100950">
    <property type="entry name" value="NagB/RpiA/CoA transferase-like"/>
    <property type="match status" value="1"/>
</dbReference>
<dbReference type="PROSITE" id="PS01161">
    <property type="entry name" value="GLC_GALNAC_ISOMERASE"/>
    <property type="match status" value="1"/>
</dbReference>
<protein>
    <recommendedName>
        <fullName evidence="1">Glucosamine-6-phosphate deaminase</fullName>
        <ecNumber evidence="1">3.5.99.6</ecNumber>
    </recommendedName>
    <alternativeName>
        <fullName evidence="1">GlcN6P deaminase</fullName>
        <shortName evidence="1">GNPDA</shortName>
    </alternativeName>
    <alternativeName>
        <fullName evidence="1">Glucosamine-6-phosphate isomerase</fullName>
    </alternativeName>
</protein>
<sequence length="266" mass="29662">MRLIPLSTAEQVGKWAARHIVNRINAFKPTTDRPFVLGLPTGGTPLTAYKALVEMHKAGEVSFKHVVTFNMDEYVGLPKEHPESYHSFMHRNFFDHVDIPAENINLLNGNAPDIDAECRQYEEKIRSYGKIHLFMGGVGNDGHIAFNEPASSLASRTRIKTLTHDTRVANSRFFDGDVNQVPKYALTVGVGTLLDAEEVMILVLGHQKAQALQAAVEGNVNHMWTISCLQLHPKAVVVCDEPSTMELKVKTLKYFNELEAENIKGL</sequence>
<organism>
    <name type="scientific">Salmonella typhi</name>
    <dbReference type="NCBI Taxonomy" id="90370"/>
    <lineage>
        <taxon>Bacteria</taxon>
        <taxon>Pseudomonadati</taxon>
        <taxon>Pseudomonadota</taxon>
        <taxon>Gammaproteobacteria</taxon>
        <taxon>Enterobacterales</taxon>
        <taxon>Enterobacteriaceae</taxon>
        <taxon>Salmonella</taxon>
    </lineage>
</organism>